<reference key="1">
    <citation type="journal article" date="2005" name="Genome Res.">
        <title>Coping with cold: the genome of the versatile marine Antarctica bacterium Pseudoalteromonas haloplanktis TAC125.</title>
        <authorList>
            <person name="Medigue C."/>
            <person name="Krin E."/>
            <person name="Pascal G."/>
            <person name="Barbe V."/>
            <person name="Bernsel A."/>
            <person name="Bertin P.N."/>
            <person name="Cheung F."/>
            <person name="Cruveiller S."/>
            <person name="D'Amico S."/>
            <person name="Duilio A."/>
            <person name="Fang G."/>
            <person name="Feller G."/>
            <person name="Ho C."/>
            <person name="Mangenot S."/>
            <person name="Marino G."/>
            <person name="Nilsson J."/>
            <person name="Parrilli E."/>
            <person name="Rocha E.P.C."/>
            <person name="Rouy Z."/>
            <person name="Sekowska A."/>
            <person name="Tutino M.L."/>
            <person name="Vallenet D."/>
            <person name="von Heijne G."/>
            <person name="Danchin A."/>
        </authorList>
    </citation>
    <scope>NUCLEOTIDE SEQUENCE [LARGE SCALE GENOMIC DNA]</scope>
    <source>
        <strain>TAC 125</strain>
    </source>
</reference>
<dbReference type="EC" id="2.7.7.60" evidence="1"/>
<dbReference type="EMBL" id="CR954246">
    <property type="protein sequence ID" value="CAI85768.1"/>
    <property type="molecule type" value="Genomic_DNA"/>
</dbReference>
<dbReference type="SMR" id="Q3IDQ6"/>
<dbReference type="STRING" id="326442.PSHAa0684"/>
<dbReference type="KEGG" id="pha:PSHAa0684"/>
<dbReference type="eggNOG" id="COG1211">
    <property type="taxonomic scope" value="Bacteria"/>
</dbReference>
<dbReference type="HOGENOM" id="CLU_061281_3_1_6"/>
<dbReference type="UniPathway" id="UPA00056">
    <property type="reaction ID" value="UER00093"/>
</dbReference>
<dbReference type="Proteomes" id="UP000006843">
    <property type="component" value="Chromosome I"/>
</dbReference>
<dbReference type="GO" id="GO:0050518">
    <property type="term" value="F:2-C-methyl-D-erythritol 4-phosphate cytidylyltransferase activity"/>
    <property type="evidence" value="ECO:0007669"/>
    <property type="project" value="UniProtKB-UniRule"/>
</dbReference>
<dbReference type="GO" id="GO:0019288">
    <property type="term" value="P:isopentenyl diphosphate biosynthetic process, methylerythritol 4-phosphate pathway"/>
    <property type="evidence" value="ECO:0007669"/>
    <property type="project" value="UniProtKB-UniRule"/>
</dbReference>
<dbReference type="CDD" id="cd02516">
    <property type="entry name" value="CDP-ME_synthetase"/>
    <property type="match status" value="1"/>
</dbReference>
<dbReference type="FunFam" id="3.90.550.10:FF:000003">
    <property type="entry name" value="2-C-methyl-D-erythritol 4-phosphate cytidylyltransferase"/>
    <property type="match status" value="1"/>
</dbReference>
<dbReference type="Gene3D" id="3.90.550.10">
    <property type="entry name" value="Spore Coat Polysaccharide Biosynthesis Protein SpsA, Chain A"/>
    <property type="match status" value="1"/>
</dbReference>
<dbReference type="HAMAP" id="MF_00108">
    <property type="entry name" value="IspD"/>
    <property type="match status" value="1"/>
</dbReference>
<dbReference type="InterPro" id="IPR001228">
    <property type="entry name" value="IspD"/>
</dbReference>
<dbReference type="InterPro" id="IPR034683">
    <property type="entry name" value="IspD/TarI"/>
</dbReference>
<dbReference type="InterPro" id="IPR050088">
    <property type="entry name" value="IspD/TarI_cytidylyltransf_bact"/>
</dbReference>
<dbReference type="InterPro" id="IPR018294">
    <property type="entry name" value="ISPD_synthase_CS"/>
</dbReference>
<dbReference type="InterPro" id="IPR029044">
    <property type="entry name" value="Nucleotide-diphossugar_trans"/>
</dbReference>
<dbReference type="NCBIfam" id="TIGR00453">
    <property type="entry name" value="ispD"/>
    <property type="match status" value="1"/>
</dbReference>
<dbReference type="PANTHER" id="PTHR32125">
    <property type="entry name" value="2-C-METHYL-D-ERYTHRITOL 4-PHOSPHATE CYTIDYLYLTRANSFERASE, CHLOROPLASTIC"/>
    <property type="match status" value="1"/>
</dbReference>
<dbReference type="PANTHER" id="PTHR32125:SF4">
    <property type="entry name" value="2-C-METHYL-D-ERYTHRITOL 4-PHOSPHATE CYTIDYLYLTRANSFERASE, CHLOROPLASTIC"/>
    <property type="match status" value="1"/>
</dbReference>
<dbReference type="Pfam" id="PF01128">
    <property type="entry name" value="IspD"/>
    <property type="match status" value="1"/>
</dbReference>
<dbReference type="SUPFAM" id="SSF53448">
    <property type="entry name" value="Nucleotide-diphospho-sugar transferases"/>
    <property type="match status" value="1"/>
</dbReference>
<dbReference type="PROSITE" id="PS01295">
    <property type="entry name" value="ISPD"/>
    <property type="match status" value="1"/>
</dbReference>
<name>ISPD_PSET1</name>
<evidence type="ECO:0000255" key="1">
    <source>
        <dbReference type="HAMAP-Rule" id="MF_00108"/>
    </source>
</evidence>
<protein>
    <recommendedName>
        <fullName evidence="1">2-C-methyl-D-erythritol 4-phosphate cytidylyltransferase</fullName>
        <ecNumber evidence="1">2.7.7.60</ecNumber>
    </recommendedName>
    <alternativeName>
        <fullName evidence="1">4-diphosphocytidyl-2C-methyl-D-erythritol synthase</fullName>
    </alternativeName>
    <alternativeName>
        <fullName evidence="1">MEP cytidylyltransferase</fullName>
        <shortName evidence="1">MCT</shortName>
    </alternativeName>
</protein>
<gene>
    <name evidence="1" type="primary">ispD</name>
    <name type="ordered locus">PSHAa0684</name>
</gene>
<sequence>MFYQLNNNMTNKPTIAAIIPAAGVGSRMQHNAPKQYIKLAGKTILEHTLTKLSALAQLNTIVVALNENDPYFEQLPVIDARIVRTCGGKERADSVLNSLLFLAANPPDWVLVHDAARPLVTIDDINTLINECISADEGGILASKVKDTIKRGHIYAEQTVPRDDLWQALTPQFFKYEDLKNALQNALASGAVITDEASAIEWANKPVKLIPGRSDNIKITTPEDLDLAGFLLQKQQNENAL</sequence>
<keyword id="KW-0414">Isoprene biosynthesis</keyword>
<keyword id="KW-0548">Nucleotidyltransferase</keyword>
<keyword id="KW-1185">Reference proteome</keyword>
<keyword id="KW-0808">Transferase</keyword>
<organism>
    <name type="scientific">Pseudoalteromonas translucida (strain TAC 125)</name>
    <dbReference type="NCBI Taxonomy" id="326442"/>
    <lineage>
        <taxon>Bacteria</taxon>
        <taxon>Pseudomonadati</taxon>
        <taxon>Pseudomonadota</taxon>
        <taxon>Gammaproteobacteria</taxon>
        <taxon>Alteromonadales</taxon>
        <taxon>Pseudoalteromonadaceae</taxon>
        <taxon>Pseudoalteromonas</taxon>
    </lineage>
</organism>
<comment type="function">
    <text evidence="1">Catalyzes the formation of 4-diphosphocytidyl-2-C-methyl-D-erythritol from CTP and 2-C-methyl-D-erythritol 4-phosphate (MEP).</text>
</comment>
<comment type="catalytic activity">
    <reaction evidence="1">
        <text>2-C-methyl-D-erythritol 4-phosphate + CTP + H(+) = 4-CDP-2-C-methyl-D-erythritol + diphosphate</text>
        <dbReference type="Rhea" id="RHEA:13429"/>
        <dbReference type="ChEBI" id="CHEBI:15378"/>
        <dbReference type="ChEBI" id="CHEBI:33019"/>
        <dbReference type="ChEBI" id="CHEBI:37563"/>
        <dbReference type="ChEBI" id="CHEBI:57823"/>
        <dbReference type="ChEBI" id="CHEBI:58262"/>
        <dbReference type="EC" id="2.7.7.60"/>
    </reaction>
</comment>
<comment type="pathway">
    <text evidence="1">Isoprenoid biosynthesis; isopentenyl diphosphate biosynthesis via DXP pathway; isopentenyl diphosphate from 1-deoxy-D-xylulose 5-phosphate: step 2/6.</text>
</comment>
<comment type="similarity">
    <text evidence="1">Belongs to the IspD/TarI cytidylyltransferase family. IspD subfamily.</text>
</comment>
<feature type="chain" id="PRO_0000237808" description="2-C-methyl-D-erythritol 4-phosphate cytidylyltransferase">
    <location>
        <begin position="1"/>
        <end position="241"/>
    </location>
</feature>
<feature type="site" description="Transition state stabilizer" evidence="1">
    <location>
        <position position="27"/>
    </location>
</feature>
<feature type="site" description="Transition state stabilizer" evidence="1">
    <location>
        <position position="34"/>
    </location>
</feature>
<feature type="site" description="Positions MEP for the nucleophilic attack" evidence="1">
    <location>
        <position position="162"/>
    </location>
</feature>
<feature type="site" description="Positions MEP for the nucleophilic attack" evidence="1">
    <location>
        <position position="218"/>
    </location>
</feature>
<accession>Q3IDQ6</accession>
<proteinExistence type="inferred from homology"/>